<protein>
    <recommendedName>
        <fullName evidence="1">Alanine--tRNA ligase</fullName>
        <ecNumber evidence="1">6.1.1.7</ecNumber>
    </recommendedName>
    <alternativeName>
        <fullName evidence="1">Alanyl-tRNA synthetase</fullName>
        <shortName evidence="1">AlaRS</shortName>
    </alternativeName>
</protein>
<reference key="1">
    <citation type="journal article" date="2010" name="Appl. Environ. Microbiol.">
        <title>The genome sequence of Psychrobacter arcticus 273-4, a psychroactive Siberian permafrost bacterium, reveals mechanisms for adaptation to low-temperature growth.</title>
        <authorList>
            <person name="Ayala-del-Rio H.L."/>
            <person name="Chain P.S."/>
            <person name="Grzymski J.J."/>
            <person name="Ponder M.A."/>
            <person name="Ivanova N."/>
            <person name="Bergholz P.W."/>
            <person name="Di Bartolo G."/>
            <person name="Hauser L."/>
            <person name="Land M."/>
            <person name="Bakermans C."/>
            <person name="Rodrigues D."/>
            <person name="Klappenbach J."/>
            <person name="Zarka D."/>
            <person name="Larimer F."/>
            <person name="Richardson P."/>
            <person name="Murray A."/>
            <person name="Thomashow M."/>
            <person name="Tiedje J.M."/>
        </authorList>
    </citation>
    <scope>NUCLEOTIDE SEQUENCE [LARGE SCALE GENOMIC DNA]</scope>
    <source>
        <strain>DSM 17307 / VKM B-2377 / 273-4</strain>
    </source>
</reference>
<name>SYA_PSYA2</name>
<keyword id="KW-0030">Aminoacyl-tRNA synthetase</keyword>
<keyword id="KW-0067">ATP-binding</keyword>
<keyword id="KW-0963">Cytoplasm</keyword>
<keyword id="KW-0436">Ligase</keyword>
<keyword id="KW-0479">Metal-binding</keyword>
<keyword id="KW-0547">Nucleotide-binding</keyword>
<keyword id="KW-0648">Protein biosynthesis</keyword>
<keyword id="KW-1185">Reference proteome</keyword>
<keyword id="KW-0694">RNA-binding</keyword>
<keyword id="KW-0820">tRNA-binding</keyword>
<keyword id="KW-0862">Zinc</keyword>
<accession>Q4FRQ0</accession>
<feature type="chain" id="PRO_0000075182" description="Alanine--tRNA ligase">
    <location>
        <begin position="1"/>
        <end position="890"/>
    </location>
</feature>
<feature type="binding site" evidence="1">
    <location>
        <position position="568"/>
    </location>
    <ligand>
        <name>Zn(2+)</name>
        <dbReference type="ChEBI" id="CHEBI:29105"/>
    </ligand>
</feature>
<feature type="binding site" evidence="1">
    <location>
        <position position="572"/>
    </location>
    <ligand>
        <name>Zn(2+)</name>
        <dbReference type="ChEBI" id="CHEBI:29105"/>
    </ligand>
</feature>
<feature type="binding site" evidence="1">
    <location>
        <position position="680"/>
    </location>
    <ligand>
        <name>Zn(2+)</name>
        <dbReference type="ChEBI" id="CHEBI:29105"/>
    </ligand>
</feature>
<feature type="binding site" evidence="1">
    <location>
        <position position="684"/>
    </location>
    <ligand>
        <name>Zn(2+)</name>
        <dbReference type="ChEBI" id="CHEBI:29105"/>
    </ligand>
</feature>
<comment type="function">
    <text evidence="1">Catalyzes the attachment of alanine to tRNA(Ala) in a two-step reaction: alanine is first activated by ATP to form Ala-AMP and then transferred to the acceptor end of tRNA(Ala). Also edits incorrectly charged Ser-tRNA(Ala) and Gly-tRNA(Ala) via its editing domain.</text>
</comment>
<comment type="catalytic activity">
    <reaction evidence="1">
        <text>tRNA(Ala) + L-alanine + ATP = L-alanyl-tRNA(Ala) + AMP + diphosphate</text>
        <dbReference type="Rhea" id="RHEA:12540"/>
        <dbReference type="Rhea" id="RHEA-COMP:9657"/>
        <dbReference type="Rhea" id="RHEA-COMP:9923"/>
        <dbReference type="ChEBI" id="CHEBI:30616"/>
        <dbReference type="ChEBI" id="CHEBI:33019"/>
        <dbReference type="ChEBI" id="CHEBI:57972"/>
        <dbReference type="ChEBI" id="CHEBI:78442"/>
        <dbReference type="ChEBI" id="CHEBI:78497"/>
        <dbReference type="ChEBI" id="CHEBI:456215"/>
        <dbReference type="EC" id="6.1.1.7"/>
    </reaction>
</comment>
<comment type="cofactor">
    <cofactor evidence="1">
        <name>Zn(2+)</name>
        <dbReference type="ChEBI" id="CHEBI:29105"/>
    </cofactor>
    <text evidence="1">Binds 1 zinc ion per subunit.</text>
</comment>
<comment type="subcellular location">
    <subcellularLocation>
        <location evidence="1">Cytoplasm</location>
    </subcellularLocation>
</comment>
<comment type="domain">
    <text evidence="1">Consists of three domains; the N-terminal catalytic domain, the editing domain and the C-terminal C-Ala domain. The editing domain removes incorrectly charged amino acids, while the C-Ala domain, along with tRNA(Ala), serves as a bridge to cooperatively bring together the editing and aminoacylation centers thus stimulating deacylation of misacylated tRNAs.</text>
</comment>
<comment type="similarity">
    <text evidence="1">Belongs to the class-II aminoacyl-tRNA synthetase family.</text>
</comment>
<gene>
    <name evidence="1" type="primary">alaS</name>
    <name type="ordered locus">Psyc_1460</name>
</gene>
<evidence type="ECO:0000255" key="1">
    <source>
        <dbReference type="HAMAP-Rule" id="MF_00036"/>
    </source>
</evidence>
<proteinExistence type="inferred from homology"/>
<organism>
    <name type="scientific">Psychrobacter arcticus (strain DSM 17307 / VKM B-2377 / 273-4)</name>
    <dbReference type="NCBI Taxonomy" id="259536"/>
    <lineage>
        <taxon>Bacteria</taxon>
        <taxon>Pseudomonadati</taxon>
        <taxon>Pseudomonadota</taxon>
        <taxon>Gammaproteobacteria</taxon>
        <taxon>Moraxellales</taxon>
        <taxon>Moraxellaceae</taxon>
        <taxon>Psychrobacter</taxon>
    </lineage>
</organism>
<dbReference type="EC" id="6.1.1.7" evidence="1"/>
<dbReference type="EMBL" id="CP000082">
    <property type="protein sequence ID" value="AAZ19308.1"/>
    <property type="molecule type" value="Genomic_DNA"/>
</dbReference>
<dbReference type="RefSeq" id="WP_011280726.1">
    <property type="nucleotide sequence ID" value="NC_007204.1"/>
</dbReference>
<dbReference type="SMR" id="Q4FRQ0"/>
<dbReference type="STRING" id="259536.Psyc_1460"/>
<dbReference type="KEGG" id="par:Psyc_1460"/>
<dbReference type="eggNOG" id="COG0013">
    <property type="taxonomic scope" value="Bacteria"/>
</dbReference>
<dbReference type="HOGENOM" id="CLU_004485_1_1_6"/>
<dbReference type="OrthoDB" id="9803884at2"/>
<dbReference type="Proteomes" id="UP000000546">
    <property type="component" value="Chromosome"/>
</dbReference>
<dbReference type="GO" id="GO:0005829">
    <property type="term" value="C:cytosol"/>
    <property type="evidence" value="ECO:0007669"/>
    <property type="project" value="TreeGrafter"/>
</dbReference>
<dbReference type="GO" id="GO:0004813">
    <property type="term" value="F:alanine-tRNA ligase activity"/>
    <property type="evidence" value="ECO:0007669"/>
    <property type="project" value="UniProtKB-UniRule"/>
</dbReference>
<dbReference type="GO" id="GO:0002161">
    <property type="term" value="F:aminoacyl-tRNA deacylase activity"/>
    <property type="evidence" value="ECO:0007669"/>
    <property type="project" value="TreeGrafter"/>
</dbReference>
<dbReference type="GO" id="GO:0005524">
    <property type="term" value="F:ATP binding"/>
    <property type="evidence" value="ECO:0007669"/>
    <property type="project" value="UniProtKB-UniRule"/>
</dbReference>
<dbReference type="GO" id="GO:0000049">
    <property type="term" value="F:tRNA binding"/>
    <property type="evidence" value="ECO:0007669"/>
    <property type="project" value="UniProtKB-KW"/>
</dbReference>
<dbReference type="GO" id="GO:0008270">
    <property type="term" value="F:zinc ion binding"/>
    <property type="evidence" value="ECO:0007669"/>
    <property type="project" value="UniProtKB-UniRule"/>
</dbReference>
<dbReference type="GO" id="GO:0006419">
    <property type="term" value="P:alanyl-tRNA aminoacylation"/>
    <property type="evidence" value="ECO:0007669"/>
    <property type="project" value="UniProtKB-UniRule"/>
</dbReference>
<dbReference type="GO" id="GO:0045892">
    <property type="term" value="P:negative regulation of DNA-templated transcription"/>
    <property type="evidence" value="ECO:0007669"/>
    <property type="project" value="TreeGrafter"/>
</dbReference>
<dbReference type="CDD" id="cd00673">
    <property type="entry name" value="AlaRS_core"/>
    <property type="match status" value="1"/>
</dbReference>
<dbReference type="FunFam" id="2.40.30.130:FF:000001">
    <property type="entry name" value="Alanine--tRNA ligase"/>
    <property type="match status" value="1"/>
</dbReference>
<dbReference type="FunFam" id="3.10.310.40:FF:000001">
    <property type="entry name" value="Alanine--tRNA ligase"/>
    <property type="match status" value="1"/>
</dbReference>
<dbReference type="FunFam" id="3.30.54.20:FF:000001">
    <property type="entry name" value="Alanine--tRNA ligase"/>
    <property type="match status" value="1"/>
</dbReference>
<dbReference type="FunFam" id="3.30.930.10:FF:000004">
    <property type="entry name" value="Alanine--tRNA ligase"/>
    <property type="match status" value="1"/>
</dbReference>
<dbReference type="FunFam" id="3.30.980.10:FF:000004">
    <property type="entry name" value="Alanine--tRNA ligase, cytoplasmic"/>
    <property type="match status" value="1"/>
</dbReference>
<dbReference type="Gene3D" id="2.40.30.130">
    <property type="match status" value="1"/>
</dbReference>
<dbReference type="Gene3D" id="3.10.310.40">
    <property type="match status" value="1"/>
</dbReference>
<dbReference type="Gene3D" id="3.30.54.20">
    <property type="match status" value="1"/>
</dbReference>
<dbReference type="Gene3D" id="6.10.250.550">
    <property type="match status" value="1"/>
</dbReference>
<dbReference type="Gene3D" id="3.30.930.10">
    <property type="entry name" value="Bira Bifunctional Protein, Domain 2"/>
    <property type="match status" value="1"/>
</dbReference>
<dbReference type="Gene3D" id="3.30.980.10">
    <property type="entry name" value="Threonyl-trna Synthetase, Chain A, domain 2"/>
    <property type="match status" value="1"/>
</dbReference>
<dbReference type="HAMAP" id="MF_00036_B">
    <property type="entry name" value="Ala_tRNA_synth_B"/>
    <property type="match status" value="1"/>
</dbReference>
<dbReference type="InterPro" id="IPR045864">
    <property type="entry name" value="aa-tRNA-synth_II/BPL/LPL"/>
</dbReference>
<dbReference type="InterPro" id="IPR002318">
    <property type="entry name" value="Ala-tRNA-lgiase_IIc"/>
</dbReference>
<dbReference type="InterPro" id="IPR018162">
    <property type="entry name" value="Ala-tRNA-ligase_IIc_anticod-bd"/>
</dbReference>
<dbReference type="InterPro" id="IPR018165">
    <property type="entry name" value="Ala-tRNA-synth_IIc_core"/>
</dbReference>
<dbReference type="InterPro" id="IPR018164">
    <property type="entry name" value="Ala-tRNA-synth_IIc_N"/>
</dbReference>
<dbReference type="InterPro" id="IPR050058">
    <property type="entry name" value="Ala-tRNA_ligase"/>
</dbReference>
<dbReference type="InterPro" id="IPR023033">
    <property type="entry name" value="Ala_tRNA_ligase_euk/bac"/>
</dbReference>
<dbReference type="InterPro" id="IPR003156">
    <property type="entry name" value="DHHA1_dom"/>
</dbReference>
<dbReference type="InterPro" id="IPR018163">
    <property type="entry name" value="Thr/Ala-tRNA-synth_IIc_edit"/>
</dbReference>
<dbReference type="InterPro" id="IPR009000">
    <property type="entry name" value="Transl_B-barrel_sf"/>
</dbReference>
<dbReference type="InterPro" id="IPR012947">
    <property type="entry name" value="tRNA_SAD"/>
</dbReference>
<dbReference type="NCBIfam" id="TIGR00344">
    <property type="entry name" value="alaS"/>
    <property type="match status" value="1"/>
</dbReference>
<dbReference type="PANTHER" id="PTHR11777:SF9">
    <property type="entry name" value="ALANINE--TRNA LIGASE, CYTOPLASMIC"/>
    <property type="match status" value="1"/>
</dbReference>
<dbReference type="PANTHER" id="PTHR11777">
    <property type="entry name" value="ALANYL-TRNA SYNTHETASE"/>
    <property type="match status" value="1"/>
</dbReference>
<dbReference type="Pfam" id="PF02272">
    <property type="entry name" value="DHHA1"/>
    <property type="match status" value="1"/>
</dbReference>
<dbReference type="Pfam" id="PF01411">
    <property type="entry name" value="tRNA-synt_2c"/>
    <property type="match status" value="1"/>
</dbReference>
<dbReference type="Pfam" id="PF07973">
    <property type="entry name" value="tRNA_SAD"/>
    <property type="match status" value="1"/>
</dbReference>
<dbReference type="PRINTS" id="PR00980">
    <property type="entry name" value="TRNASYNTHALA"/>
</dbReference>
<dbReference type="SMART" id="SM00863">
    <property type="entry name" value="tRNA_SAD"/>
    <property type="match status" value="1"/>
</dbReference>
<dbReference type="SUPFAM" id="SSF55681">
    <property type="entry name" value="Class II aaRS and biotin synthetases"/>
    <property type="match status" value="1"/>
</dbReference>
<dbReference type="SUPFAM" id="SSF101353">
    <property type="entry name" value="Putative anticodon-binding domain of alanyl-tRNA synthetase (AlaRS)"/>
    <property type="match status" value="1"/>
</dbReference>
<dbReference type="SUPFAM" id="SSF55186">
    <property type="entry name" value="ThrRS/AlaRS common domain"/>
    <property type="match status" value="1"/>
</dbReference>
<dbReference type="SUPFAM" id="SSF50447">
    <property type="entry name" value="Translation proteins"/>
    <property type="match status" value="1"/>
</dbReference>
<dbReference type="PROSITE" id="PS50860">
    <property type="entry name" value="AA_TRNA_LIGASE_II_ALA"/>
    <property type="match status" value="1"/>
</dbReference>
<sequence length="890" mass="97610">MSQPFRSADIRQAFIDFFISKQHTPVASSSLIPHNDPTLLFTNAGMNQFKETFLGMEPRDYTRAVTSQKCVRAGGKHNDLDNVGYTARHHTFFEMLGNFSFGDYFKQAGIGYIWEFLTSDEWLAIDKNRLYVTIYETDDEAFDIWHKDIGIPSERIIRIGDNKGAPYASDNFWTMGDTGPCGPCTEVFYDHGADIEGGLPGTPEEDGDRYIEIWNCVFMQFNRQKDGTMLPLPAPSVDTGMGLERISAIMQGVHGNYEIDLFVHLMDAAAEILEIENQQQSSLKVIADHIRAVSFLIADGVTPSNEGRGYVLRRVIRRAVRHGNKLGADSDFFYKMVAPLVAEMGIAYPELKDKQSVIENTIQKEEAQFAKTLAQGLRLLASELEGLQDGDTLSGEAAFKLYDTYGFPVDLTADITRERGIVIDEAEFDEHMQAQRERARDAGKFDVDYSSVIQVENPTTFIGYEQLEQEGVAIDALYQDGNPADSLTEGMEGVVVLDRTPFYAEGGGQVGELGEIRTATGVFDVQDTKKSGQAIIHYGVVTMGEIKTKQTADAQVLSSIRAASAKNHSATHLLHAALREVLGDAVTQKGSLVSSEVLRFDFSYDKPVSPAEIMRIERLVNEQIQANTPTRIENMPIDEAIKQGAMALFGEKYGNDVRVLTMGTDSIVDGQRMPFSIELCGGLHVQRTGDIGVLKITSESGIAAGIRRIEAVTAMNAIKNIQQSEQQLSELASQLKVKRPEVAQRVRTMADKQRDLEKQLERLEQKIASAQAANLLDEVQTIAGIPLLISTLSGVDGKSIRTLMDDIKSKLPDSVIVLIGDKDEQLALAANVAKSVTDRIKAGDIIRYLAGELGGKGGGKPDYAQGGAPKSNNSAAVIAALPAWVAAQLS</sequence>